<feature type="signal peptide" evidence="2">
    <location>
        <begin position="1"/>
        <end position="20"/>
    </location>
</feature>
<feature type="propeptide" id="PRO_0000401797" evidence="1">
    <location>
        <begin position="21"/>
        <end position="26"/>
    </location>
</feature>
<feature type="chain" id="PRO_0000401798" description="U8-lycotoxin-Ls1i">
    <location>
        <begin position="27"/>
        <end position="77"/>
    </location>
</feature>
<keyword id="KW-1015">Disulfide bond</keyword>
<keyword id="KW-0964">Secreted</keyword>
<keyword id="KW-0732">Signal</keyword>
<keyword id="KW-0800">Toxin</keyword>
<organism>
    <name type="scientific">Lycosa singoriensis</name>
    <name type="common">Wolf spider</name>
    <name type="synonym">Aranea singoriensis</name>
    <dbReference type="NCBI Taxonomy" id="434756"/>
    <lineage>
        <taxon>Eukaryota</taxon>
        <taxon>Metazoa</taxon>
        <taxon>Ecdysozoa</taxon>
        <taxon>Arthropoda</taxon>
        <taxon>Chelicerata</taxon>
        <taxon>Arachnida</taxon>
        <taxon>Araneae</taxon>
        <taxon>Araneomorphae</taxon>
        <taxon>Entelegynae</taxon>
        <taxon>Lycosoidea</taxon>
        <taxon>Lycosidae</taxon>
        <taxon>Lycosa</taxon>
    </lineage>
</organism>
<proteinExistence type="evidence at transcript level"/>
<sequence length="77" mass="8613">MKLIIFTGLVLFAIVSLIEVQADNERACLPQYQVCTEAPGNCCSNLVCDCYGRYKSGARIGRNCFCLQKGVIYKREN</sequence>
<accession>B6DCY9</accession>
<reference key="1">
    <citation type="journal article" date="2010" name="Zoology">
        <title>Transcriptome analysis of the venom glands of the Chinese wolf spider Lycosa singoriensis.</title>
        <authorList>
            <person name="Zhang Y."/>
            <person name="Chen J."/>
            <person name="Tang X."/>
            <person name="Wang F."/>
            <person name="Jiang L."/>
            <person name="Xiong X."/>
            <person name="Wang M."/>
            <person name="Rong M."/>
            <person name="Liu Z."/>
            <person name="Liang S."/>
        </authorList>
    </citation>
    <scope>NUCLEOTIDE SEQUENCE [LARGE SCALE MRNA]</scope>
    <source>
        <tissue>Venom gland</tissue>
    </source>
</reference>
<protein>
    <recommendedName>
        <fullName>U8-lycotoxin-Ls1i</fullName>
    </recommendedName>
    <alternativeName>
        <fullName>Toxin-like structure LSTX-H18</fullName>
    </alternativeName>
</protein>
<evidence type="ECO:0000250" key="1"/>
<evidence type="ECO:0000255" key="2"/>
<evidence type="ECO:0000305" key="3"/>
<comment type="subcellular location">
    <subcellularLocation>
        <location evidence="1">Secreted</location>
    </subcellularLocation>
</comment>
<comment type="tissue specificity">
    <text>Expressed by the venom gland.</text>
</comment>
<comment type="PTM">
    <text evidence="1">Contains 4 disulfide bonds.</text>
</comment>
<comment type="similarity">
    <text evidence="3">Belongs to the neurotoxin 19 (CSTX) family. 08 (U8-Lctx) subfamily.</text>
</comment>
<name>TX818_LYCSI</name>
<dbReference type="EMBL" id="EU926073">
    <property type="protein sequence ID" value="ACI41405.1"/>
    <property type="molecule type" value="mRNA"/>
</dbReference>
<dbReference type="EMBL" id="FM864077">
    <property type="protein sequence ID" value="CAS03674.1"/>
    <property type="molecule type" value="mRNA"/>
</dbReference>
<dbReference type="SMR" id="B6DCY9"/>
<dbReference type="ArachnoServer" id="AS001012">
    <property type="toxin name" value="U8-lycotoxin-Ls1i"/>
</dbReference>
<dbReference type="GO" id="GO:0005576">
    <property type="term" value="C:extracellular region"/>
    <property type="evidence" value="ECO:0007669"/>
    <property type="project" value="UniProtKB-SubCell"/>
</dbReference>
<dbReference type="GO" id="GO:0090729">
    <property type="term" value="F:toxin activity"/>
    <property type="evidence" value="ECO:0007669"/>
    <property type="project" value="UniProtKB-KW"/>
</dbReference>
<dbReference type="InterPro" id="IPR019553">
    <property type="entry name" value="Spider_toxin_CSTX_knottin"/>
</dbReference>
<dbReference type="Pfam" id="PF10530">
    <property type="entry name" value="Toxin_35"/>
    <property type="match status" value="1"/>
</dbReference>